<comment type="function">
    <text evidence="1">Usually encoded in the trnK tRNA gene intron. Probably assists in splicing its own and other chloroplast group II introns.</text>
</comment>
<comment type="subcellular location">
    <subcellularLocation>
        <location>Plastid</location>
        <location>Chloroplast</location>
    </subcellularLocation>
</comment>
<comment type="similarity">
    <text evidence="1">Belongs to the intron maturase 2 family. MatK subfamily.</text>
</comment>
<reference key="1">
    <citation type="submission" date="2003-05" db="EMBL/GenBank/DDBJ databases">
        <title>Phylogenetic relationship of subtribe Clematidinae (Ranunculaceae) based on chloroplast and nuclear DNA sequences.</title>
        <authorList>
            <person name="Miikeda O."/>
            <person name="Kita K."/>
            <person name="Handa T."/>
            <person name="Yukawa T."/>
        </authorList>
    </citation>
    <scope>NUCLEOTIDE SEQUENCE [GENOMIC DNA]</scope>
</reference>
<keyword id="KW-0150">Chloroplast</keyword>
<keyword id="KW-0507">mRNA processing</keyword>
<keyword id="KW-0934">Plastid</keyword>
<keyword id="KW-0694">RNA-binding</keyword>
<keyword id="KW-0819">tRNA processing</keyword>
<protein>
    <recommendedName>
        <fullName evidence="1">Maturase K</fullName>
    </recommendedName>
    <alternativeName>
        <fullName evidence="1">Intron maturase</fullName>
    </alternativeName>
</protein>
<evidence type="ECO:0000255" key="1">
    <source>
        <dbReference type="HAMAP-Rule" id="MF_01390"/>
    </source>
</evidence>
<sequence length="509" mass="61056">MEELQGYLKIDRSRERDFLYPLLFQEYIYALAHDHGLNKSILYEPMENLGYDKKYSLIIVKRLITRMYQQKHLIIFTNDSNTNFFFGHNKNLDSQMISEGVAVIVELPFSLRLVSSPESKEIDKSMTTLRSIHSIFPFLEDKLLHLNHVLDILIPYPIHLELLVQTLRSWIQDAPFLHLLRFFLYKYHNWNSLITQKTKMILFFSKENQRFFLFLYNFHVYESESIFVFLRKQSYHLRSTSSRAFLDRTHFYRKIEHFLVDFRNDFHTILWLFKDPFIQYFRFQGKSILSSKGTPLLMKKWKYYLVNLWECHFYFWSQPDRIHINQLSNHFIDFLGYLSSVRPTPSAVRSQMLEKSFIIDIVIKKFDTIVPIIPLIGSLAKAKFCNFSGHPISKPAWADSSDSDIIDRFGRICRNLSHYYSGSSKKKSLYRIKYILRLSCARTLARKHKSTVRSFLKRLGSEFLEEFLMEEEQVLSFILPRISYFSKRLYKERIWYFDIIRINDLTNLS</sequence>
<proteinExistence type="inferred from homology"/>
<organism>
    <name type="scientific">Clematis lasiantha</name>
    <name type="common">Pipestem clematis</name>
    <dbReference type="NCBI Taxonomy" id="231652"/>
    <lineage>
        <taxon>Eukaryota</taxon>
        <taxon>Viridiplantae</taxon>
        <taxon>Streptophyta</taxon>
        <taxon>Embryophyta</taxon>
        <taxon>Tracheophyta</taxon>
        <taxon>Spermatophyta</taxon>
        <taxon>Magnoliopsida</taxon>
        <taxon>Ranunculales</taxon>
        <taxon>Ranunculaceae</taxon>
        <taxon>Ranunculoideae</taxon>
        <taxon>Anemoneae</taxon>
        <taxon>Clematis</taxon>
    </lineage>
</organism>
<gene>
    <name evidence="1" type="primary">matK</name>
</gene>
<dbReference type="EMBL" id="AB110518">
    <property type="protein sequence ID" value="BAC77191.1"/>
    <property type="molecule type" value="Genomic_DNA"/>
</dbReference>
<dbReference type="RefSeq" id="YP_010441426.1">
    <property type="nucleotide sequence ID" value="NC_065280.1"/>
</dbReference>
<dbReference type="GeneID" id="73944251"/>
<dbReference type="GO" id="GO:0009507">
    <property type="term" value="C:chloroplast"/>
    <property type="evidence" value="ECO:0007669"/>
    <property type="project" value="UniProtKB-SubCell"/>
</dbReference>
<dbReference type="GO" id="GO:0003723">
    <property type="term" value="F:RNA binding"/>
    <property type="evidence" value="ECO:0007669"/>
    <property type="project" value="UniProtKB-KW"/>
</dbReference>
<dbReference type="GO" id="GO:0006397">
    <property type="term" value="P:mRNA processing"/>
    <property type="evidence" value="ECO:0007669"/>
    <property type="project" value="UniProtKB-KW"/>
</dbReference>
<dbReference type="GO" id="GO:0008380">
    <property type="term" value="P:RNA splicing"/>
    <property type="evidence" value="ECO:0007669"/>
    <property type="project" value="UniProtKB-UniRule"/>
</dbReference>
<dbReference type="GO" id="GO:0008033">
    <property type="term" value="P:tRNA processing"/>
    <property type="evidence" value="ECO:0007669"/>
    <property type="project" value="UniProtKB-KW"/>
</dbReference>
<dbReference type="HAMAP" id="MF_01390">
    <property type="entry name" value="MatK"/>
    <property type="match status" value="1"/>
</dbReference>
<dbReference type="InterPro" id="IPR024937">
    <property type="entry name" value="Domain_X"/>
</dbReference>
<dbReference type="InterPro" id="IPR002866">
    <property type="entry name" value="Maturase_MatK"/>
</dbReference>
<dbReference type="InterPro" id="IPR024942">
    <property type="entry name" value="Maturase_MatK_N"/>
</dbReference>
<dbReference type="PANTHER" id="PTHR34811">
    <property type="entry name" value="MATURASE K"/>
    <property type="match status" value="1"/>
</dbReference>
<dbReference type="PANTHER" id="PTHR34811:SF1">
    <property type="entry name" value="MATURASE K"/>
    <property type="match status" value="1"/>
</dbReference>
<dbReference type="Pfam" id="PF01348">
    <property type="entry name" value="Intron_maturas2"/>
    <property type="match status" value="1"/>
</dbReference>
<dbReference type="Pfam" id="PF01824">
    <property type="entry name" value="MatK_N"/>
    <property type="match status" value="1"/>
</dbReference>
<accession>Q7YMV7</accession>
<name>MATK_CLELA</name>
<feature type="chain" id="PRO_0000143335" description="Maturase K">
    <location>
        <begin position="1"/>
        <end position="509"/>
    </location>
</feature>
<geneLocation type="chloroplast"/>